<evidence type="ECO:0000255" key="1">
    <source>
        <dbReference type="HAMAP-Rule" id="MF_01132"/>
    </source>
</evidence>
<proteinExistence type="inferred from homology"/>
<feature type="chain" id="PRO_0000162568" description="Global transcriptional regulator Spx">
    <location>
        <begin position="1"/>
        <end position="131"/>
    </location>
</feature>
<feature type="disulfide bond" description="Redox-active" evidence="1">
    <location>
        <begin position="10"/>
        <end position="13"/>
    </location>
</feature>
<comment type="function">
    <text evidence="1">Global transcriptional regulator that plays a key role in stress response and exerts either positive or negative regulation of genes. Acts by interacting with the C-terminal domain of the alpha subunit of the RNA polymerase (RNAP). This interaction can enhance binding of RNAP to the promoter region of target genes and stimulate their transcription, or block interaction of RNAP with activator.</text>
</comment>
<comment type="subunit">
    <text evidence="1">Interacts with the C-terminal domain of the alpha subunit of the RNAP.</text>
</comment>
<comment type="subcellular location">
    <subcellularLocation>
        <location evidence="1">Cytoplasm</location>
    </subcellularLocation>
</comment>
<comment type="similarity">
    <text evidence="1">Belongs to the ArsC family. Spx subfamily.</text>
</comment>
<keyword id="KW-0963">Cytoplasm</keyword>
<keyword id="KW-1015">Disulfide bond</keyword>
<keyword id="KW-0676">Redox-active center</keyword>
<keyword id="KW-0804">Transcription</keyword>
<keyword id="KW-0805">Transcription regulation</keyword>
<gene>
    <name evidence="1" type="primary">spx</name>
    <name type="ordered locus">SE_0686</name>
</gene>
<accession>Q8CT68</accession>
<organism>
    <name type="scientific">Staphylococcus epidermidis (strain ATCC 12228 / FDA PCI 1200)</name>
    <dbReference type="NCBI Taxonomy" id="176280"/>
    <lineage>
        <taxon>Bacteria</taxon>
        <taxon>Bacillati</taxon>
        <taxon>Bacillota</taxon>
        <taxon>Bacilli</taxon>
        <taxon>Bacillales</taxon>
        <taxon>Staphylococcaceae</taxon>
        <taxon>Staphylococcus</taxon>
    </lineage>
</organism>
<reference key="1">
    <citation type="journal article" date="2003" name="Mol. Microbiol.">
        <title>Genome-based analysis of virulence genes in a non-biofilm-forming Staphylococcus epidermidis strain (ATCC 12228).</title>
        <authorList>
            <person name="Zhang Y.-Q."/>
            <person name="Ren S.-X."/>
            <person name="Li H.-L."/>
            <person name="Wang Y.-X."/>
            <person name="Fu G."/>
            <person name="Yang J."/>
            <person name="Qin Z.-Q."/>
            <person name="Miao Y.-G."/>
            <person name="Wang W.-Y."/>
            <person name="Chen R.-S."/>
            <person name="Shen Y."/>
            <person name="Chen Z."/>
            <person name="Yuan Z.-H."/>
            <person name="Zhao G.-P."/>
            <person name="Qu D."/>
            <person name="Danchin A."/>
            <person name="Wen Y.-M."/>
        </authorList>
    </citation>
    <scope>NUCLEOTIDE SEQUENCE [LARGE SCALE GENOMIC DNA]</scope>
    <source>
        <strain>ATCC 12228 / FDA PCI 1200</strain>
    </source>
</reference>
<name>SPX_STAES</name>
<dbReference type="EMBL" id="AE015929">
    <property type="protein sequence ID" value="AAO04283.1"/>
    <property type="molecule type" value="Genomic_DNA"/>
</dbReference>
<dbReference type="RefSeq" id="NP_764241.1">
    <property type="nucleotide sequence ID" value="NC_004461.1"/>
</dbReference>
<dbReference type="SMR" id="Q8CT68"/>
<dbReference type="KEGG" id="sep:SE_0686"/>
<dbReference type="PATRIC" id="fig|176280.10.peg.660"/>
<dbReference type="eggNOG" id="COG1393">
    <property type="taxonomic scope" value="Bacteria"/>
</dbReference>
<dbReference type="HOGENOM" id="CLU_116644_1_1_9"/>
<dbReference type="OrthoDB" id="9794155at2"/>
<dbReference type="PRO" id="PR:Q8CT68"/>
<dbReference type="Proteomes" id="UP000001411">
    <property type="component" value="Chromosome"/>
</dbReference>
<dbReference type="GO" id="GO:0005737">
    <property type="term" value="C:cytoplasm"/>
    <property type="evidence" value="ECO:0007669"/>
    <property type="project" value="UniProtKB-SubCell"/>
</dbReference>
<dbReference type="GO" id="GO:0045892">
    <property type="term" value="P:negative regulation of DNA-templated transcription"/>
    <property type="evidence" value="ECO:0007669"/>
    <property type="project" value="InterPro"/>
</dbReference>
<dbReference type="CDD" id="cd03032">
    <property type="entry name" value="ArsC_Spx"/>
    <property type="match status" value="1"/>
</dbReference>
<dbReference type="Gene3D" id="3.40.30.10">
    <property type="entry name" value="Glutaredoxin"/>
    <property type="match status" value="1"/>
</dbReference>
<dbReference type="HAMAP" id="MF_01132">
    <property type="entry name" value="Spx"/>
    <property type="match status" value="1"/>
</dbReference>
<dbReference type="InterPro" id="IPR006660">
    <property type="entry name" value="Arsenate_reductase-like"/>
</dbReference>
<dbReference type="InterPro" id="IPR023731">
    <property type="entry name" value="Spx"/>
</dbReference>
<dbReference type="InterPro" id="IPR036249">
    <property type="entry name" value="Thioredoxin-like_sf"/>
</dbReference>
<dbReference type="InterPro" id="IPR006504">
    <property type="entry name" value="Tscrpt_reg_Spx/MgsR"/>
</dbReference>
<dbReference type="NCBIfam" id="TIGR01617">
    <property type="entry name" value="arsC_related"/>
    <property type="match status" value="1"/>
</dbReference>
<dbReference type="NCBIfam" id="NF002459">
    <property type="entry name" value="PRK01655.1"/>
    <property type="match status" value="1"/>
</dbReference>
<dbReference type="NCBIfam" id="NF009210">
    <property type="entry name" value="PRK12559.1"/>
    <property type="match status" value="1"/>
</dbReference>
<dbReference type="PANTHER" id="PTHR30041">
    <property type="entry name" value="ARSENATE REDUCTASE"/>
    <property type="match status" value="1"/>
</dbReference>
<dbReference type="PANTHER" id="PTHR30041:SF7">
    <property type="entry name" value="GLOBAL TRANSCRIPTIONAL REGULATOR SPX"/>
    <property type="match status" value="1"/>
</dbReference>
<dbReference type="Pfam" id="PF03960">
    <property type="entry name" value="ArsC"/>
    <property type="match status" value="1"/>
</dbReference>
<dbReference type="SUPFAM" id="SSF52833">
    <property type="entry name" value="Thioredoxin-like"/>
    <property type="match status" value="1"/>
</dbReference>
<dbReference type="PROSITE" id="PS51353">
    <property type="entry name" value="ARSC"/>
    <property type="match status" value="1"/>
</dbReference>
<sequence>MVTLFTSPSCTSCRKAKAWLQEHDIPYTERNIFSEHLTIDEIKQILKMTEDGTDEIISTRSKTYQKLNVDIDSLPLQDLYSIIQDNPGLLRRPIILDDKRLQVGYNEDEIRRFLPRKVRTFQLQEAQRLVD</sequence>
<protein>
    <recommendedName>
        <fullName evidence="1">Global transcriptional regulator Spx</fullName>
    </recommendedName>
</protein>